<keyword id="KW-0235">DNA replication</keyword>
<keyword id="KW-0239">DNA-directed DNA polymerase</keyword>
<keyword id="KW-0548">Nucleotidyltransferase</keyword>
<keyword id="KW-1185">Reference proteome</keyword>
<keyword id="KW-0808">Transferase</keyword>
<dbReference type="EC" id="2.7.7.7"/>
<dbReference type="EMBL" id="BA000003">
    <property type="protein sequence ID" value="BAB13143.1"/>
    <property type="molecule type" value="Genomic_DNA"/>
</dbReference>
<dbReference type="RefSeq" id="NP_240257.1">
    <property type="nucleotide sequence ID" value="NC_002528.1"/>
</dbReference>
<dbReference type="RefSeq" id="WP_009874399.1">
    <property type="nucleotide sequence ID" value="NC_002528.1"/>
</dbReference>
<dbReference type="SMR" id="P57520"/>
<dbReference type="STRING" id="563178.BUAP5A_438"/>
<dbReference type="EnsemblBacteria" id="BAB13143">
    <property type="protein sequence ID" value="BAB13143"/>
    <property type="gene ID" value="BAB13143"/>
</dbReference>
<dbReference type="KEGG" id="buc:BU445"/>
<dbReference type="PATRIC" id="fig|107806.10.peg.455"/>
<dbReference type="eggNOG" id="COG1466">
    <property type="taxonomic scope" value="Bacteria"/>
</dbReference>
<dbReference type="HOGENOM" id="CLU_044694_0_2_6"/>
<dbReference type="Proteomes" id="UP000001806">
    <property type="component" value="Chromosome"/>
</dbReference>
<dbReference type="GO" id="GO:0009360">
    <property type="term" value="C:DNA polymerase III complex"/>
    <property type="evidence" value="ECO:0007669"/>
    <property type="project" value="InterPro"/>
</dbReference>
<dbReference type="GO" id="GO:0003677">
    <property type="term" value="F:DNA binding"/>
    <property type="evidence" value="ECO:0007669"/>
    <property type="project" value="InterPro"/>
</dbReference>
<dbReference type="GO" id="GO:0003887">
    <property type="term" value="F:DNA-directed DNA polymerase activity"/>
    <property type="evidence" value="ECO:0007669"/>
    <property type="project" value="UniProtKB-KW"/>
</dbReference>
<dbReference type="GO" id="GO:0006261">
    <property type="term" value="P:DNA-templated DNA replication"/>
    <property type="evidence" value="ECO:0007669"/>
    <property type="project" value="TreeGrafter"/>
</dbReference>
<dbReference type="Gene3D" id="1.10.8.60">
    <property type="match status" value="1"/>
</dbReference>
<dbReference type="Gene3D" id="1.20.272.10">
    <property type="match status" value="1"/>
</dbReference>
<dbReference type="Gene3D" id="3.40.50.300">
    <property type="entry name" value="P-loop containing nucleotide triphosphate hydrolases"/>
    <property type="match status" value="1"/>
</dbReference>
<dbReference type="InterPro" id="IPR008921">
    <property type="entry name" value="DNA_pol3_clamp-load_cplx_C"/>
</dbReference>
<dbReference type="InterPro" id="IPR032780">
    <property type="entry name" value="DNA_pol3_delt_C"/>
</dbReference>
<dbReference type="InterPro" id="IPR010372">
    <property type="entry name" value="DNA_pol3_delta_N"/>
</dbReference>
<dbReference type="InterPro" id="IPR005790">
    <property type="entry name" value="DNA_polIII_delta"/>
</dbReference>
<dbReference type="InterPro" id="IPR027417">
    <property type="entry name" value="P-loop_NTPase"/>
</dbReference>
<dbReference type="NCBIfam" id="TIGR01128">
    <property type="entry name" value="holA"/>
    <property type="match status" value="1"/>
</dbReference>
<dbReference type="PANTHER" id="PTHR34388">
    <property type="entry name" value="DNA POLYMERASE III SUBUNIT DELTA"/>
    <property type="match status" value="1"/>
</dbReference>
<dbReference type="PANTHER" id="PTHR34388:SF1">
    <property type="entry name" value="DNA POLYMERASE III SUBUNIT DELTA"/>
    <property type="match status" value="1"/>
</dbReference>
<dbReference type="Pfam" id="PF14840">
    <property type="entry name" value="DNA_pol3_delt_C"/>
    <property type="match status" value="1"/>
</dbReference>
<dbReference type="Pfam" id="PF06144">
    <property type="entry name" value="DNA_pol3_delta"/>
    <property type="match status" value="1"/>
</dbReference>
<dbReference type="SUPFAM" id="SSF52540">
    <property type="entry name" value="P-loop containing nucleoside triphosphate hydrolases"/>
    <property type="match status" value="1"/>
</dbReference>
<dbReference type="SUPFAM" id="SSF48019">
    <property type="entry name" value="post-AAA+ oligomerization domain-like"/>
    <property type="match status" value="1"/>
</dbReference>
<reference key="1">
    <citation type="journal article" date="2000" name="Nature">
        <title>Genome sequence of the endocellular bacterial symbiont of aphids Buchnera sp. APS.</title>
        <authorList>
            <person name="Shigenobu S."/>
            <person name="Watanabe H."/>
            <person name="Hattori M."/>
            <person name="Sakaki Y."/>
            <person name="Ishikawa H."/>
        </authorList>
    </citation>
    <scope>NUCLEOTIDE SEQUENCE [LARGE SCALE GENOMIC DNA]</scope>
    <source>
        <strain>APS</strain>
    </source>
</reference>
<protein>
    <recommendedName>
        <fullName>DNA polymerase III subunit delta</fullName>
        <ecNumber>2.7.7.7</ecNumber>
    </recommendedName>
</protein>
<name>HOLA_BUCAI</name>
<accession>P57520</accession>
<sequence>MKNIYPNELKKSLMQKLHYFYIFLGEDFFLLEKNQDMILNFAYKKGFLEKIIIDVEKNQDWKKIILFYKTNNLFFKKTTLVINFLIKKLNVILIQNLNKMFSLLHPDILIILKFNHLSRFIQKNKSLKEFKNYNIVSCFTPYNLNFINWIKYEIQEKKINIEEKAFFLLCKYYEGNTLFIYKILDMLFIIWPDTCITEKKIKKIIIEFFDVSPSYWINSIFQGKTEKSFYILNIFFKKKYNPLILVRSLQKDLLQLIHMKREKKISIYVMLEKYNIFVTRRKFFIKAFNKINNDSLLKAIQILVKIEVNIKKKYNNYVWNQLQELILILCN</sequence>
<evidence type="ECO:0000250" key="1"/>
<evidence type="ECO:0000305" key="2"/>
<gene>
    <name type="primary">holA</name>
    <name type="ordered locus">BU445</name>
</gene>
<proteinExistence type="inferred from homology"/>
<comment type="function">
    <text evidence="1">DNA polymerase III is a complex, multichain enzyme responsible for most of the replicative synthesis in bacteria. This DNA polymerase also exhibits 3' to 5' exonuclease activity. The delta subunit seems to interact with the gamma subunit to transfer the beta subunit on the DNA (By similarity).</text>
</comment>
<comment type="catalytic activity">
    <reaction>
        <text>DNA(n) + a 2'-deoxyribonucleoside 5'-triphosphate = DNA(n+1) + diphosphate</text>
        <dbReference type="Rhea" id="RHEA:22508"/>
        <dbReference type="Rhea" id="RHEA-COMP:17339"/>
        <dbReference type="Rhea" id="RHEA-COMP:17340"/>
        <dbReference type="ChEBI" id="CHEBI:33019"/>
        <dbReference type="ChEBI" id="CHEBI:61560"/>
        <dbReference type="ChEBI" id="CHEBI:173112"/>
        <dbReference type="EC" id="2.7.7.7"/>
    </reaction>
</comment>
<comment type="subunit">
    <text evidence="1">DNA polymerase III contains a core (composed of alpha, epsilon and theta chains) that associates with a tau subunit. This core dimerizes to form the POLIII' complex. PolIII' associates with the gamma complex (composed of gamma, delta, delta', psi and chi chains) and with the beta chain to form the complete DNA polymerase III complex (By similarity).</text>
</comment>
<comment type="similarity">
    <text evidence="2">Belongs to the DNA polymerase HolA subunit family.</text>
</comment>
<organism>
    <name type="scientific">Buchnera aphidicola subsp. Acyrthosiphon pisum (strain APS)</name>
    <name type="common">Acyrthosiphon pisum symbiotic bacterium</name>
    <dbReference type="NCBI Taxonomy" id="107806"/>
    <lineage>
        <taxon>Bacteria</taxon>
        <taxon>Pseudomonadati</taxon>
        <taxon>Pseudomonadota</taxon>
        <taxon>Gammaproteobacteria</taxon>
        <taxon>Enterobacterales</taxon>
        <taxon>Erwiniaceae</taxon>
        <taxon>Buchnera</taxon>
    </lineage>
</organism>
<feature type="chain" id="PRO_0000105502" description="DNA polymerase III subunit delta">
    <location>
        <begin position="1"/>
        <end position="331"/>
    </location>
</feature>